<accession>Q6B8X4</accession>
<proteinExistence type="inferred from homology"/>
<evidence type="ECO:0000255" key="1">
    <source>
        <dbReference type="HAMAP-Rule" id="MF_00059"/>
    </source>
</evidence>
<reference key="1">
    <citation type="journal article" date="2004" name="J. Mol. Evol.">
        <title>Comparative analysis of the complete plastid genome sequence of the red alga Gracilaria tenuistipitata var. liui provides insights into the evolution of rhodoplasts and their relationship to other plastids.</title>
        <authorList>
            <person name="Hagopian J.C."/>
            <person name="Reis M."/>
            <person name="Kitajima J.P."/>
            <person name="Bhattacharya D."/>
            <person name="de Oliveira M.C."/>
        </authorList>
    </citation>
    <scope>NUCLEOTIDE SEQUENCE [LARGE SCALE GENOMIC DNA]</scope>
</reference>
<name>RPOA_GRATL</name>
<sequence length="314" mass="35640">MTYFQIECVESKTESNRQQYGRFILEPLNKGQGITLGNSLRRTILSDLQGAAIVAVRIAGINHEFSTITGVREDVLEILLNLKKVVLKSHSDTPQIGRIRLQGPAIITTGLFEVPPEILIIDPQQYIATICNNTIFEMEFRIEKGSGYKLVNKGFDKKSIDFLQIDAVFMPVTKFNYTVEEKKISPILIQEKLFLEVWTNGSLSPQEAISEGAQVLHSLFYPLTNLNFQNANNTDNEYEEEINQVLIEELQLSVRAYNCLKRAQINSISDLLDYSQDELLEIKNFGQKSAEEVIEALQNKLGIRLPKEKNIQNT</sequence>
<feature type="chain" id="PRO_0000175458" description="DNA-directed RNA polymerase subunit alpha">
    <location>
        <begin position="1"/>
        <end position="314"/>
    </location>
</feature>
<feature type="region of interest" description="Alpha N-terminal domain (alpha-NTD)" evidence="1">
    <location>
        <begin position="1"/>
        <end position="227"/>
    </location>
</feature>
<feature type="region of interest" description="Alpha C-terminal domain (alpha-CTD)" evidence="1">
    <location>
        <begin position="239"/>
        <end position="314"/>
    </location>
</feature>
<geneLocation type="chloroplast"/>
<dbReference type="EC" id="2.7.7.6" evidence="1"/>
<dbReference type="EMBL" id="AY673996">
    <property type="protein sequence ID" value="AAT79661.1"/>
    <property type="molecule type" value="Genomic_DNA"/>
</dbReference>
<dbReference type="RefSeq" id="YP_063586.1">
    <property type="nucleotide sequence ID" value="NC_006137.1"/>
</dbReference>
<dbReference type="SMR" id="Q6B8X4"/>
<dbReference type="GeneID" id="2943967"/>
<dbReference type="GO" id="GO:0009507">
    <property type="term" value="C:chloroplast"/>
    <property type="evidence" value="ECO:0007669"/>
    <property type="project" value="UniProtKB-SubCell"/>
</dbReference>
<dbReference type="GO" id="GO:0000428">
    <property type="term" value="C:DNA-directed RNA polymerase complex"/>
    <property type="evidence" value="ECO:0007669"/>
    <property type="project" value="UniProtKB-KW"/>
</dbReference>
<dbReference type="GO" id="GO:0005739">
    <property type="term" value="C:mitochondrion"/>
    <property type="evidence" value="ECO:0007669"/>
    <property type="project" value="GOC"/>
</dbReference>
<dbReference type="GO" id="GO:0003677">
    <property type="term" value="F:DNA binding"/>
    <property type="evidence" value="ECO:0007669"/>
    <property type="project" value="UniProtKB-UniRule"/>
</dbReference>
<dbReference type="GO" id="GO:0003899">
    <property type="term" value="F:DNA-directed RNA polymerase activity"/>
    <property type="evidence" value="ECO:0007669"/>
    <property type="project" value="UniProtKB-UniRule"/>
</dbReference>
<dbReference type="GO" id="GO:0046983">
    <property type="term" value="F:protein dimerization activity"/>
    <property type="evidence" value="ECO:0007669"/>
    <property type="project" value="InterPro"/>
</dbReference>
<dbReference type="GO" id="GO:0006351">
    <property type="term" value="P:DNA-templated transcription"/>
    <property type="evidence" value="ECO:0007669"/>
    <property type="project" value="UniProtKB-UniRule"/>
</dbReference>
<dbReference type="CDD" id="cd06928">
    <property type="entry name" value="RNAP_alpha_NTD"/>
    <property type="match status" value="1"/>
</dbReference>
<dbReference type="FunFam" id="2.170.120.12:FF:000001">
    <property type="entry name" value="DNA-directed RNA polymerase subunit alpha"/>
    <property type="match status" value="1"/>
</dbReference>
<dbReference type="Gene3D" id="1.10.150.20">
    <property type="entry name" value="5' to 3' exonuclease, C-terminal subdomain"/>
    <property type="match status" value="1"/>
</dbReference>
<dbReference type="Gene3D" id="2.170.120.12">
    <property type="entry name" value="DNA-directed RNA polymerase, insert domain"/>
    <property type="match status" value="1"/>
</dbReference>
<dbReference type="Gene3D" id="3.30.1360.10">
    <property type="entry name" value="RNA polymerase, RBP11-like subunit"/>
    <property type="match status" value="1"/>
</dbReference>
<dbReference type="HAMAP" id="MF_00059">
    <property type="entry name" value="RNApol_bact_RpoA"/>
    <property type="match status" value="1"/>
</dbReference>
<dbReference type="InterPro" id="IPR011262">
    <property type="entry name" value="DNA-dir_RNA_pol_insert"/>
</dbReference>
<dbReference type="InterPro" id="IPR011263">
    <property type="entry name" value="DNA-dir_RNA_pol_RpoA/D/Rpb3"/>
</dbReference>
<dbReference type="InterPro" id="IPR011773">
    <property type="entry name" value="DNA-dir_RpoA"/>
</dbReference>
<dbReference type="InterPro" id="IPR036603">
    <property type="entry name" value="RBP11-like"/>
</dbReference>
<dbReference type="InterPro" id="IPR011260">
    <property type="entry name" value="RNAP_asu_C"/>
</dbReference>
<dbReference type="InterPro" id="IPR036643">
    <property type="entry name" value="RNApol_insert_sf"/>
</dbReference>
<dbReference type="NCBIfam" id="NF003516">
    <property type="entry name" value="PRK05182.2-2"/>
    <property type="match status" value="1"/>
</dbReference>
<dbReference type="NCBIfam" id="NF003519">
    <property type="entry name" value="PRK05182.2-5"/>
    <property type="match status" value="1"/>
</dbReference>
<dbReference type="NCBIfam" id="TIGR02027">
    <property type="entry name" value="rpoA"/>
    <property type="match status" value="1"/>
</dbReference>
<dbReference type="Pfam" id="PF01000">
    <property type="entry name" value="RNA_pol_A_bac"/>
    <property type="match status" value="1"/>
</dbReference>
<dbReference type="Pfam" id="PF03118">
    <property type="entry name" value="RNA_pol_A_CTD"/>
    <property type="match status" value="1"/>
</dbReference>
<dbReference type="Pfam" id="PF01193">
    <property type="entry name" value="RNA_pol_L"/>
    <property type="match status" value="1"/>
</dbReference>
<dbReference type="SMART" id="SM00662">
    <property type="entry name" value="RPOLD"/>
    <property type="match status" value="1"/>
</dbReference>
<dbReference type="SUPFAM" id="SSF47789">
    <property type="entry name" value="C-terminal domain of RNA polymerase alpha subunit"/>
    <property type="match status" value="1"/>
</dbReference>
<dbReference type="SUPFAM" id="SSF56553">
    <property type="entry name" value="Insert subdomain of RNA polymerase alpha subunit"/>
    <property type="match status" value="1"/>
</dbReference>
<dbReference type="SUPFAM" id="SSF55257">
    <property type="entry name" value="RBP11-like subunits of RNA polymerase"/>
    <property type="match status" value="1"/>
</dbReference>
<protein>
    <recommendedName>
        <fullName evidence="1">DNA-directed RNA polymerase subunit alpha</fullName>
        <shortName evidence="1">PEP</shortName>
        <ecNumber evidence="1">2.7.7.6</ecNumber>
    </recommendedName>
    <alternativeName>
        <fullName evidence="1">Plastid-encoded RNA polymerase subunit alpha</fullName>
        <shortName evidence="1">RNA polymerase subunit alpha</shortName>
    </alternativeName>
</protein>
<gene>
    <name evidence="1" type="primary">rpoA</name>
    <name type="ordered locus">Grc000080</name>
</gene>
<keyword id="KW-0150">Chloroplast</keyword>
<keyword id="KW-0240">DNA-directed RNA polymerase</keyword>
<keyword id="KW-0548">Nucleotidyltransferase</keyword>
<keyword id="KW-0934">Plastid</keyword>
<keyword id="KW-0804">Transcription</keyword>
<keyword id="KW-0808">Transferase</keyword>
<organism>
    <name type="scientific">Gracilaria tenuistipitata var. liui</name>
    <name type="common">Red alga</name>
    <dbReference type="NCBI Taxonomy" id="285951"/>
    <lineage>
        <taxon>Eukaryota</taxon>
        <taxon>Rhodophyta</taxon>
        <taxon>Florideophyceae</taxon>
        <taxon>Rhodymeniophycidae</taxon>
        <taxon>Gracilariales</taxon>
        <taxon>Gracilariaceae</taxon>
        <taxon>Gracilaria</taxon>
        <taxon>Gracilaria tenuistipitata</taxon>
    </lineage>
</organism>
<comment type="function">
    <text evidence="1">DNA-dependent RNA polymerase catalyzes the transcription of DNA into RNA using the four ribonucleoside triphosphates as substrates.</text>
</comment>
<comment type="catalytic activity">
    <reaction evidence="1">
        <text>RNA(n) + a ribonucleoside 5'-triphosphate = RNA(n+1) + diphosphate</text>
        <dbReference type="Rhea" id="RHEA:21248"/>
        <dbReference type="Rhea" id="RHEA-COMP:14527"/>
        <dbReference type="Rhea" id="RHEA-COMP:17342"/>
        <dbReference type="ChEBI" id="CHEBI:33019"/>
        <dbReference type="ChEBI" id="CHEBI:61557"/>
        <dbReference type="ChEBI" id="CHEBI:140395"/>
        <dbReference type="EC" id="2.7.7.6"/>
    </reaction>
</comment>
<comment type="subunit">
    <text evidence="1">In plastids the minimal PEP RNA polymerase catalytic core is composed of four subunits: alpha, beta, beta', and beta''. When a (nuclear-encoded) sigma factor is associated with the core the holoenzyme is formed, which can initiate transcription.</text>
</comment>
<comment type="subcellular location">
    <subcellularLocation>
        <location>Plastid</location>
        <location>Chloroplast</location>
    </subcellularLocation>
</comment>
<comment type="domain">
    <text evidence="1">The N-terminal domain is essential for RNAP assembly and basal transcription, whereas the C-terminal domain is involved in interaction with transcriptional regulators and with upstream promoter elements.</text>
</comment>
<comment type="similarity">
    <text evidence="1">Belongs to the RNA polymerase alpha chain family.</text>
</comment>